<sequence>MTTDNTNTTRNDSLVARTDTWLQSLLVWSPGQRDIIKTVALVLMVLDHANRILHLDQSWMFLAGRGAFPLFALVWGLNLSRHAHIRQLAINRLWGWAVFSQFWYYFAGFPWYEGNILFAFAVAAQVLTWCETRSGWRTAAAILMMALWGPLSGTSYGIAGLLMLAVSHRLYRAEDRMERLVLVACLLAVIPALNLATSDAAAVAGLVMTVLTVGLVSCAGKLLSRFWPGDFFPTFYACHLAVLGVLAL</sequence>
<comment type="function">
    <text evidence="2">Responsible for the N-terminal acetylation of F pilin.</text>
</comment>
<comment type="subcellular location">
    <subcellularLocation>
        <location evidence="3">Cell membrane</location>
        <topology evidence="3">Multi-pass membrane protein</topology>
    </subcellularLocation>
</comment>
<comment type="similarity">
    <text evidence="3">Belongs to the TraX family.</text>
</comment>
<accession>P22709</accession>
<protein>
    <recommendedName>
        <fullName>Protein TraX</fullName>
    </recommendedName>
</protein>
<reference key="1">
    <citation type="journal article" date="1991" name="Gene">
        <title>Sequence and conservation of genes at the distal end of the transfer region on plasmids F and R6-5.</title>
        <authorList>
            <person name="Cram D.S."/>
            <person name="Loh S.M."/>
            <person name="Cheah K.C."/>
            <person name="Skurray R.A."/>
        </authorList>
    </citation>
    <scope>NUCLEOTIDE SEQUENCE [GENOMIC DNA]</scope>
</reference>
<reference key="2">
    <citation type="journal article" date="1994" name="Microbiol. Rev.">
        <title>Analysis of the sequence and gene products of the transfer region of the F sex factor.</title>
        <authorList>
            <person name="Frost L.S."/>
            <person name="Ippen-Ihler K."/>
            <person name="Skurray R.A."/>
        </authorList>
    </citation>
    <scope>NUCLEOTIDE SEQUENCE [GENOMIC DNA]</scope>
</reference>
<reference key="3">
    <citation type="submission" date="2000-04" db="EMBL/GenBank/DDBJ databases">
        <title>Complete nucleotide sequence of the F plasmid: its implications for organization and diversification of plasmid genomes.</title>
        <authorList>
            <person name="Shimizu H."/>
            <person name="Saitoh Y."/>
            <person name="Suda Y."/>
            <person name="Uehara K."/>
            <person name="Sampei G."/>
            <person name="Mizobuchi K."/>
        </authorList>
    </citation>
    <scope>NUCLEOTIDE SEQUENCE [LARGE SCALE GENOMIC DNA]</scope>
    <source>
        <strain>K12 / CR63</strain>
    </source>
</reference>
<reference key="4">
    <citation type="journal article" date="1990" name="J. Mol. Biol.">
        <title>Nucleotide sequence of the promoter-distal region of the tra operon of plasmid R100, including traI (DNA helicase I) and traD genes.</title>
        <authorList>
            <person name="Yoshioka Y."/>
            <person name="Fujita Y."/>
            <person name="Ohtsubo E."/>
        </authorList>
    </citation>
    <scope>NUCLEOTIDE SEQUENCE [GENOMIC DNA] OF 133-248</scope>
</reference>
<reference key="5">
    <citation type="journal article" date="1993" name="J. Bacteriol.">
        <title>The Escherichia coli K-12 F plasmid gene traX is required for acetylation of F pilin.</title>
        <authorList>
            <person name="Moore D."/>
            <person name="Hamilton C.M."/>
            <person name="Maneewannakul K."/>
            <person name="Mintz Y."/>
            <person name="Frost L.S."/>
            <person name="Ippen-Ihler K."/>
        </authorList>
    </citation>
    <scope>FUNCTION</scope>
</reference>
<organism>
    <name type="scientific">Escherichia coli (strain K12)</name>
    <dbReference type="NCBI Taxonomy" id="83333"/>
    <lineage>
        <taxon>Bacteria</taxon>
        <taxon>Pseudomonadati</taxon>
        <taxon>Pseudomonadota</taxon>
        <taxon>Gammaproteobacteria</taxon>
        <taxon>Enterobacterales</taxon>
        <taxon>Enterobacteriaceae</taxon>
        <taxon>Escherichia</taxon>
    </lineage>
</organism>
<dbReference type="EMBL" id="M38047">
    <property type="protein sequence ID" value="AAA98091.1"/>
    <property type="molecule type" value="Genomic_DNA"/>
</dbReference>
<dbReference type="EMBL" id="U01159">
    <property type="protein sequence ID" value="AAC44201.1"/>
    <property type="molecule type" value="Genomic_DNA"/>
</dbReference>
<dbReference type="EMBL" id="AP001918">
    <property type="protein sequence ID" value="BAA97975.1"/>
    <property type="molecule type" value="Genomic_DNA"/>
</dbReference>
<dbReference type="EMBL" id="X57429">
    <property type="protein sequence ID" value="CAA40675.1"/>
    <property type="molecule type" value="Genomic_DNA"/>
</dbReference>
<dbReference type="PIR" id="JQ1338">
    <property type="entry name" value="JQ1338"/>
</dbReference>
<dbReference type="RefSeq" id="NP_061484.1">
    <property type="nucleotide sequence ID" value="NC_002483.1"/>
</dbReference>
<dbReference type="RefSeq" id="WP_000205776.1">
    <property type="nucleotide sequence ID" value="NC_002483.1"/>
</dbReference>
<dbReference type="KEGG" id="ecoc:C3026_24630"/>
<dbReference type="PATRIC" id="fig|83333.107.peg.606"/>
<dbReference type="OrthoDB" id="6596894at2"/>
<dbReference type="PRO" id="PR:P22709"/>
<dbReference type="GO" id="GO:0005886">
    <property type="term" value="C:plasma membrane"/>
    <property type="evidence" value="ECO:0007669"/>
    <property type="project" value="UniProtKB-SubCell"/>
</dbReference>
<dbReference type="InterPro" id="IPR008875">
    <property type="entry name" value="TraX"/>
</dbReference>
<dbReference type="InterPro" id="IPR014125">
    <property type="entry name" value="TraX_Ftype"/>
</dbReference>
<dbReference type="NCBIfam" id="NF010260">
    <property type="entry name" value="PRK13706.1"/>
    <property type="match status" value="1"/>
</dbReference>
<dbReference type="NCBIfam" id="TIGR02755">
    <property type="entry name" value="TraX_Ftype"/>
    <property type="match status" value="1"/>
</dbReference>
<dbReference type="Pfam" id="PF05857">
    <property type="entry name" value="TraX"/>
    <property type="match status" value="1"/>
</dbReference>
<geneLocation type="plasmid">
    <name>F</name>
</geneLocation>
<keyword id="KW-1003">Cell membrane</keyword>
<keyword id="KW-0472">Membrane</keyword>
<keyword id="KW-0614">Plasmid</keyword>
<keyword id="KW-0812">Transmembrane</keyword>
<keyword id="KW-1133">Transmembrane helix</keyword>
<feature type="chain" id="PRO_0000068478" description="Protein TraX">
    <location>
        <begin position="1"/>
        <end position="248"/>
    </location>
</feature>
<feature type="transmembrane region" description="Helical" evidence="1">
    <location>
        <begin position="39"/>
        <end position="55"/>
    </location>
</feature>
<feature type="transmembrane region" description="Helical" evidence="1">
    <location>
        <begin position="180"/>
        <end position="196"/>
    </location>
</feature>
<feature type="transmembrane region" description="Helical" evidence="1">
    <location>
        <begin position="200"/>
        <end position="216"/>
    </location>
</feature>
<feature type="transmembrane region" description="Helical" evidence="1">
    <location>
        <begin position="232"/>
        <end position="248"/>
    </location>
</feature>
<evidence type="ECO:0000255" key="1"/>
<evidence type="ECO:0000269" key="2">
    <source>
    </source>
</evidence>
<evidence type="ECO:0000305" key="3"/>
<proteinExistence type="inferred from homology"/>
<gene>
    <name type="primary">traX</name>
    <name type="ordered locus">ECOK12F105</name>
</gene>
<name>TRAX1_ECOLI</name>